<protein>
    <recommendedName>
        <fullName evidence="1">Uroporphyrinogen decarboxylase</fullName>
        <shortName evidence="1">UPD</shortName>
        <shortName evidence="1">URO-D</shortName>
        <ecNumber evidence="1">4.1.1.37</ecNumber>
    </recommendedName>
</protein>
<reference key="1">
    <citation type="journal article" date="2000" name="Nucleic Acids Res.">
        <title>Complete genome sequence of the alkaliphilic bacterium Bacillus halodurans and genomic sequence comparison with Bacillus subtilis.</title>
        <authorList>
            <person name="Takami H."/>
            <person name="Nakasone K."/>
            <person name="Takaki Y."/>
            <person name="Maeno G."/>
            <person name="Sasaki R."/>
            <person name="Masui N."/>
            <person name="Fuji F."/>
            <person name="Hirama C."/>
            <person name="Nakamura Y."/>
            <person name="Ogasawara N."/>
            <person name="Kuhara S."/>
            <person name="Horikoshi K."/>
        </authorList>
    </citation>
    <scope>NUCLEOTIDE SEQUENCE [LARGE SCALE GENOMIC DNA]</scope>
    <source>
        <strain>ATCC BAA-125 / DSM 18197 / FERM 7344 / JCM 9153 / C-125</strain>
    </source>
</reference>
<accession>Q9KDL0</accession>
<gene>
    <name evidence="1" type="primary">hemE</name>
    <name type="ordered locus">BH1202</name>
</gene>
<evidence type="ECO:0000255" key="1">
    <source>
        <dbReference type="HAMAP-Rule" id="MF_00218"/>
    </source>
</evidence>
<name>DCUP_HALH5</name>
<comment type="function">
    <text evidence="1">Catalyzes the decarboxylation of four acetate groups of uroporphyrinogen-III to yield coproporphyrinogen-III.</text>
</comment>
<comment type="catalytic activity">
    <reaction evidence="1">
        <text>uroporphyrinogen III + 4 H(+) = coproporphyrinogen III + 4 CO2</text>
        <dbReference type="Rhea" id="RHEA:19865"/>
        <dbReference type="ChEBI" id="CHEBI:15378"/>
        <dbReference type="ChEBI" id="CHEBI:16526"/>
        <dbReference type="ChEBI" id="CHEBI:57308"/>
        <dbReference type="ChEBI" id="CHEBI:57309"/>
        <dbReference type="EC" id="4.1.1.37"/>
    </reaction>
</comment>
<comment type="pathway">
    <text evidence="1">Porphyrin-containing compound metabolism; protoporphyrin-IX biosynthesis; coproporphyrinogen-III from 5-aminolevulinate: step 4/4.</text>
</comment>
<comment type="subunit">
    <text evidence="1">Homodimer.</text>
</comment>
<comment type="subcellular location">
    <subcellularLocation>
        <location evidence="1">Cytoplasm</location>
    </subcellularLocation>
</comment>
<comment type="similarity">
    <text evidence="1">Belongs to the uroporphyrinogen decarboxylase family.</text>
</comment>
<keyword id="KW-0963">Cytoplasm</keyword>
<keyword id="KW-0210">Decarboxylase</keyword>
<keyword id="KW-0456">Lyase</keyword>
<keyword id="KW-0627">Porphyrin biosynthesis</keyword>
<keyword id="KW-1185">Reference proteome</keyword>
<proteinExistence type="inferred from homology"/>
<organism>
    <name type="scientific">Halalkalibacterium halodurans (strain ATCC BAA-125 / DSM 18197 / FERM 7344 / JCM 9153 / C-125)</name>
    <name type="common">Bacillus halodurans</name>
    <dbReference type="NCBI Taxonomy" id="272558"/>
    <lineage>
        <taxon>Bacteria</taxon>
        <taxon>Bacillati</taxon>
        <taxon>Bacillota</taxon>
        <taxon>Bacilli</taxon>
        <taxon>Bacillales</taxon>
        <taxon>Bacillaceae</taxon>
        <taxon>Halalkalibacterium (ex Joshi et al. 2022)</taxon>
    </lineage>
</organism>
<feature type="chain" id="PRO_0000187583" description="Uroporphyrinogen decarboxylase">
    <location>
        <begin position="1"/>
        <end position="344"/>
    </location>
</feature>
<feature type="binding site" evidence="1">
    <location>
        <begin position="27"/>
        <end position="31"/>
    </location>
    <ligand>
        <name>substrate</name>
    </ligand>
</feature>
<feature type="binding site" evidence="1">
    <location>
        <position position="46"/>
    </location>
    <ligand>
        <name>substrate</name>
    </ligand>
</feature>
<feature type="binding site" evidence="1">
    <location>
        <position position="76"/>
    </location>
    <ligand>
        <name>substrate</name>
    </ligand>
</feature>
<feature type="binding site" evidence="1">
    <location>
        <position position="151"/>
    </location>
    <ligand>
        <name>substrate</name>
    </ligand>
</feature>
<feature type="binding site" evidence="1">
    <location>
        <position position="206"/>
    </location>
    <ligand>
        <name>substrate</name>
    </ligand>
</feature>
<feature type="binding site" evidence="1">
    <location>
        <position position="319"/>
    </location>
    <ligand>
        <name>substrate</name>
    </ligand>
</feature>
<feature type="site" description="Transition state stabilizer" evidence="1">
    <location>
        <position position="76"/>
    </location>
</feature>
<sequence length="344" mass="38901">MSNSFNDTFLKACKGEVHDHVPVWYMRQAGRSQPEYRKIKEKYSLFEITKQPELCAYVTKLPVDQYNNDAAILYKDIMTPLPFIGVDVEIKTGKGPVIDNPIQSYADVERLGTIQPEEDVPYVLDTIKLLREQLTVPLISFAGAPFTLASYMIEGGPSKSYNKTKAFMYAEPKAWHLLMDKLGEMTITYVKAQIAAGAQAIQIFDSWVGTLNVQDYRVFVKPVMERTFSELQKEKVPLIMFGVGASHLVNEWNDLPLDVVGLDWRLQIKEARELGVTKTVQGNLDPAILLAPWEVIEARAKEILDQGLETPNFIFNLGHGVFPEVEPDTLKRLTAFVHEYSANN</sequence>
<dbReference type="EC" id="4.1.1.37" evidence="1"/>
<dbReference type="EMBL" id="BA000004">
    <property type="protein sequence ID" value="BAB04921.1"/>
    <property type="molecule type" value="Genomic_DNA"/>
</dbReference>
<dbReference type="PIR" id="B83800">
    <property type="entry name" value="B83800"/>
</dbReference>
<dbReference type="RefSeq" id="WP_010897371.1">
    <property type="nucleotide sequence ID" value="NC_002570.2"/>
</dbReference>
<dbReference type="SMR" id="Q9KDL0"/>
<dbReference type="STRING" id="272558.gene:10727096"/>
<dbReference type="KEGG" id="bha:BH1202"/>
<dbReference type="eggNOG" id="COG0407">
    <property type="taxonomic scope" value="Bacteria"/>
</dbReference>
<dbReference type="HOGENOM" id="CLU_040933_0_1_9"/>
<dbReference type="OrthoDB" id="9806656at2"/>
<dbReference type="UniPathway" id="UPA00251">
    <property type="reaction ID" value="UER00321"/>
</dbReference>
<dbReference type="Proteomes" id="UP000001258">
    <property type="component" value="Chromosome"/>
</dbReference>
<dbReference type="GO" id="GO:0005829">
    <property type="term" value="C:cytosol"/>
    <property type="evidence" value="ECO:0007669"/>
    <property type="project" value="TreeGrafter"/>
</dbReference>
<dbReference type="GO" id="GO:0004853">
    <property type="term" value="F:uroporphyrinogen decarboxylase activity"/>
    <property type="evidence" value="ECO:0007669"/>
    <property type="project" value="UniProtKB-UniRule"/>
</dbReference>
<dbReference type="GO" id="GO:0006782">
    <property type="term" value="P:protoporphyrinogen IX biosynthetic process"/>
    <property type="evidence" value="ECO:0007669"/>
    <property type="project" value="UniProtKB-UniRule"/>
</dbReference>
<dbReference type="CDD" id="cd00717">
    <property type="entry name" value="URO-D"/>
    <property type="match status" value="1"/>
</dbReference>
<dbReference type="FunFam" id="3.20.20.210:FF:000005">
    <property type="entry name" value="Uroporphyrinogen decarboxylase"/>
    <property type="match status" value="1"/>
</dbReference>
<dbReference type="Gene3D" id="3.20.20.210">
    <property type="match status" value="1"/>
</dbReference>
<dbReference type="HAMAP" id="MF_00218">
    <property type="entry name" value="URO_D"/>
    <property type="match status" value="1"/>
</dbReference>
<dbReference type="InterPro" id="IPR038071">
    <property type="entry name" value="UROD/MetE-like_sf"/>
</dbReference>
<dbReference type="InterPro" id="IPR006361">
    <property type="entry name" value="Uroporphyrinogen_deCO2ase_HemE"/>
</dbReference>
<dbReference type="InterPro" id="IPR000257">
    <property type="entry name" value="Uroporphyrinogen_deCOase"/>
</dbReference>
<dbReference type="NCBIfam" id="TIGR01464">
    <property type="entry name" value="hemE"/>
    <property type="match status" value="1"/>
</dbReference>
<dbReference type="PANTHER" id="PTHR21091">
    <property type="entry name" value="METHYLTETRAHYDROFOLATE:HOMOCYSTEINE METHYLTRANSFERASE RELATED"/>
    <property type="match status" value="1"/>
</dbReference>
<dbReference type="PANTHER" id="PTHR21091:SF169">
    <property type="entry name" value="UROPORPHYRINOGEN DECARBOXYLASE"/>
    <property type="match status" value="1"/>
</dbReference>
<dbReference type="Pfam" id="PF01208">
    <property type="entry name" value="URO-D"/>
    <property type="match status" value="1"/>
</dbReference>
<dbReference type="SUPFAM" id="SSF51726">
    <property type="entry name" value="UROD/MetE-like"/>
    <property type="match status" value="1"/>
</dbReference>
<dbReference type="PROSITE" id="PS00906">
    <property type="entry name" value="UROD_1"/>
    <property type="match status" value="1"/>
</dbReference>
<dbReference type="PROSITE" id="PS00907">
    <property type="entry name" value="UROD_2"/>
    <property type="match status" value="1"/>
</dbReference>